<dbReference type="EC" id="3.1.3.48"/>
<dbReference type="EMBL" id="M38012">
    <property type="protein sequence ID" value="AAA29819.1"/>
    <property type="molecule type" value="mRNA"/>
</dbReference>
<dbReference type="SMR" id="P28219"/>
<dbReference type="GO" id="GO:0004725">
    <property type="term" value="F:protein tyrosine phosphatase activity"/>
    <property type="evidence" value="ECO:0007669"/>
    <property type="project" value="UniProtKB-EC"/>
</dbReference>
<dbReference type="CDD" id="cd00047">
    <property type="entry name" value="PTPc"/>
    <property type="match status" value="1"/>
</dbReference>
<dbReference type="Gene3D" id="3.90.190.10">
    <property type="entry name" value="Protein tyrosine phosphatase superfamily"/>
    <property type="match status" value="1"/>
</dbReference>
<dbReference type="InterPro" id="IPR029021">
    <property type="entry name" value="Prot-tyrosine_phosphatase-like"/>
</dbReference>
<dbReference type="InterPro" id="IPR050348">
    <property type="entry name" value="Protein-Tyr_Phosphatase"/>
</dbReference>
<dbReference type="InterPro" id="IPR000242">
    <property type="entry name" value="PTP_cat"/>
</dbReference>
<dbReference type="PANTHER" id="PTHR19134:SF562">
    <property type="entry name" value="PROTEIN-TYROSINE-PHOSPHATASE"/>
    <property type="match status" value="1"/>
</dbReference>
<dbReference type="PANTHER" id="PTHR19134">
    <property type="entry name" value="RECEPTOR-TYPE TYROSINE-PROTEIN PHOSPHATASE"/>
    <property type="match status" value="1"/>
</dbReference>
<dbReference type="Pfam" id="PF00102">
    <property type="entry name" value="Y_phosphatase"/>
    <property type="match status" value="1"/>
</dbReference>
<dbReference type="SMART" id="SM00194">
    <property type="entry name" value="PTPc"/>
    <property type="match status" value="1"/>
</dbReference>
<dbReference type="SUPFAM" id="SSF52799">
    <property type="entry name" value="(Phosphotyrosine protein) phosphatases II"/>
    <property type="match status" value="1"/>
</dbReference>
<dbReference type="PROSITE" id="PS50055">
    <property type="entry name" value="TYR_PHOSPHATASE_PTP"/>
    <property type="match status" value="1"/>
</dbReference>
<organism>
    <name type="scientific">Styela plicata</name>
    <name type="common">Wrinkled sea squirt</name>
    <name type="synonym">Ascidia plicata</name>
    <dbReference type="NCBI Taxonomy" id="7726"/>
    <lineage>
        <taxon>Eukaryota</taxon>
        <taxon>Metazoa</taxon>
        <taxon>Chordata</taxon>
        <taxon>Tunicata</taxon>
        <taxon>Ascidiacea</taxon>
        <taxon>Stolidobranchia</taxon>
        <taxon>Styelidae</taxon>
        <taxon>Styela</taxon>
    </lineage>
</organism>
<comment type="catalytic activity">
    <reaction evidence="3">
        <text>O-phospho-L-tyrosyl-[protein] + H2O = L-tyrosyl-[protein] + phosphate</text>
        <dbReference type="Rhea" id="RHEA:10684"/>
        <dbReference type="Rhea" id="RHEA-COMP:10136"/>
        <dbReference type="Rhea" id="RHEA-COMP:20101"/>
        <dbReference type="ChEBI" id="CHEBI:15377"/>
        <dbReference type="ChEBI" id="CHEBI:43474"/>
        <dbReference type="ChEBI" id="CHEBI:46858"/>
        <dbReference type="ChEBI" id="CHEBI:61978"/>
        <dbReference type="EC" id="3.1.3.48"/>
    </reaction>
</comment>
<comment type="similarity">
    <text evidence="4">Belongs to the protein-tyrosine phosphatase family.</text>
</comment>
<evidence type="ECO:0000250" key="1"/>
<evidence type="ECO:0000255" key="2">
    <source>
        <dbReference type="PROSITE-ProRule" id="PRU00160"/>
    </source>
</evidence>
<evidence type="ECO:0000255" key="3">
    <source>
        <dbReference type="PROSITE-ProRule" id="PRU10044"/>
    </source>
</evidence>
<evidence type="ECO:0000305" key="4"/>
<reference key="1">
    <citation type="journal article" date="1991" name="Immunogenetics">
        <title>Protein tyrosine phosphatase domains from the protochordate Styela plicata.</title>
        <authorList>
            <person name="Matthews R.J."/>
            <person name="Flores E."/>
            <person name="Thomas M.L."/>
        </authorList>
    </citation>
    <scope>NUCLEOTIDE SEQUENCE [MRNA]</scope>
</reference>
<protein>
    <recommendedName>
        <fullName>Tyrosine-protein phosphatase 27</fullName>
        <ecNumber>3.1.3.48</ecNumber>
    </recommendedName>
</protein>
<gene>
    <name type="primary">STY-27</name>
</gene>
<proteinExistence type="evidence at transcript level"/>
<accession>P28219</accession>
<sequence>WQMIVEHKCCVIVMLAREIEAGKKKCEKYWPDAGKQLRFGGISVENRQEVNYSAFRRRVFSVVSEKQEQLTVYQYQFLKWPDHGVPQTTSNLFRMHRAVLKSCQELGNDNPIVV</sequence>
<feature type="chain" id="PRO_0000094915" description="Tyrosine-protein phosphatase 27">
    <location>
        <begin position="1" status="less than"/>
        <end position="114" status="greater than"/>
    </location>
</feature>
<feature type="domain" description="Tyrosine-protein phosphatase" evidence="2">
    <location>
        <begin position="1" status="less than"/>
        <end position="114" status="greater than"/>
    </location>
</feature>
<feature type="binding site" evidence="1">
    <location>
        <position position="82"/>
    </location>
    <ligand>
        <name>substrate</name>
    </ligand>
</feature>
<feature type="non-terminal residue">
    <location>
        <position position="1"/>
    </location>
</feature>
<feature type="non-terminal residue">
    <location>
        <position position="114"/>
    </location>
</feature>
<keyword id="KW-0378">Hydrolase</keyword>
<keyword id="KW-0904">Protein phosphatase</keyword>
<name>PTP27_STYPL</name>